<comment type="function">
    <text evidence="1">Catalyzes the NAD-dependent reduction of succinylglutamate semialdehyde into succinylglutamate.</text>
</comment>
<comment type="catalytic activity">
    <reaction evidence="1">
        <text>N-succinyl-L-glutamate 5-semialdehyde + NAD(+) + H2O = N-succinyl-L-glutamate + NADH + 2 H(+)</text>
        <dbReference type="Rhea" id="RHEA:10812"/>
        <dbReference type="ChEBI" id="CHEBI:15377"/>
        <dbReference type="ChEBI" id="CHEBI:15378"/>
        <dbReference type="ChEBI" id="CHEBI:57540"/>
        <dbReference type="ChEBI" id="CHEBI:57945"/>
        <dbReference type="ChEBI" id="CHEBI:58520"/>
        <dbReference type="ChEBI" id="CHEBI:58763"/>
        <dbReference type="EC" id="1.2.1.71"/>
    </reaction>
</comment>
<comment type="pathway">
    <text evidence="1">Amino-acid degradation; L-arginine degradation via AST pathway; L-glutamate and succinate from L-arginine: step 4/5.</text>
</comment>
<comment type="similarity">
    <text evidence="1">Belongs to the aldehyde dehydrogenase family. AstD subfamily.</text>
</comment>
<comment type="sequence caution" evidence="2">
    <conflict type="erroneous termination">
        <sequence resource="EMBL-CDS" id="AAO68840"/>
    </conflict>
    <text>Truncated C-terminus.</text>
</comment>
<comment type="sequence caution" evidence="2">
    <conflict type="erroneous termination">
        <sequence resource="EMBL-CDS" id="CAD02049"/>
    </conflict>
    <text>Truncated C-terminus.</text>
</comment>
<dbReference type="EC" id="1.2.1.71" evidence="1"/>
<dbReference type="EMBL" id="AL513382">
    <property type="protein sequence ID" value="CAD02049.1"/>
    <property type="status" value="ALT_SEQ"/>
    <property type="molecule type" value="Genomic_DNA"/>
</dbReference>
<dbReference type="EMBL" id="AE014613">
    <property type="protein sequence ID" value="AAO68840.1"/>
    <property type="status" value="ALT_SEQ"/>
    <property type="molecule type" value="Genomic_DNA"/>
</dbReference>
<dbReference type="SMR" id="Q8Z6G1"/>
<dbReference type="STRING" id="220341.gene:17585741"/>
<dbReference type="KEGG" id="stt:t1184"/>
<dbReference type="KEGG" id="sty:STY1809"/>
<dbReference type="eggNOG" id="COG1012">
    <property type="taxonomic scope" value="Bacteria"/>
</dbReference>
<dbReference type="HOGENOM" id="CLU_005391_1_0_6"/>
<dbReference type="OMA" id="LIPAAWD"/>
<dbReference type="UniPathway" id="UPA00185">
    <property type="reaction ID" value="UER00282"/>
</dbReference>
<dbReference type="Proteomes" id="UP000000541">
    <property type="component" value="Chromosome"/>
</dbReference>
<dbReference type="Proteomes" id="UP000002670">
    <property type="component" value="Chromosome"/>
</dbReference>
<dbReference type="GO" id="GO:0043824">
    <property type="term" value="F:succinylglutamate-semialdehyde dehydrogenase activity"/>
    <property type="evidence" value="ECO:0007669"/>
    <property type="project" value="UniProtKB-EC"/>
</dbReference>
<dbReference type="GO" id="GO:0019544">
    <property type="term" value="P:arginine catabolic process to glutamate"/>
    <property type="evidence" value="ECO:0007669"/>
    <property type="project" value="UniProtKB-UniRule"/>
</dbReference>
<dbReference type="GO" id="GO:0019545">
    <property type="term" value="P:arginine catabolic process to succinate"/>
    <property type="evidence" value="ECO:0007669"/>
    <property type="project" value="UniProtKB-UniRule"/>
</dbReference>
<dbReference type="CDD" id="cd07095">
    <property type="entry name" value="ALDH_SGSD_AstD"/>
    <property type="match status" value="1"/>
</dbReference>
<dbReference type="FunFam" id="3.40.309.10:FF:000013">
    <property type="entry name" value="N-succinylglutamate 5-semialdehyde dehydrogenase"/>
    <property type="match status" value="1"/>
</dbReference>
<dbReference type="FunFam" id="3.40.605.10:FF:000010">
    <property type="entry name" value="N-succinylglutamate 5-semialdehyde dehydrogenase"/>
    <property type="match status" value="1"/>
</dbReference>
<dbReference type="Gene3D" id="3.40.605.10">
    <property type="entry name" value="Aldehyde Dehydrogenase, Chain A, domain 1"/>
    <property type="match status" value="1"/>
</dbReference>
<dbReference type="Gene3D" id="3.40.309.10">
    <property type="entry name" value="Aldehyde Dehydrogenase, Chain A, domain 2"/>
    <property type="match status" value="1"/>
</dbReference>
<dbReference type="HAMAP" id="MF_01174">
    <property type="entry name" value="Aldedh_AstD"/>
    <property type="match status" value="1"/>
</dbReference>
<dbReference type="InterPro" id="IPR016161">
    <property type="entry name" value="Ald_DH/histidinol_DH"/>
</dbReference>
<dbReference type="InterPro" id="IPR016163">
    <property type="entry name" value="Ald_DH_C"/>
</dbReference>
<dbReference type="InterPro" id="IPR016160">
    <property type="entry name" value="Ald_DH_CS_CYS"/>
</dbReference>
<dbReference type="InterPro" id="IPR029510">
    <property type="entry name" value="Ald_DH_CS_GLU"/>
</dbReference>
<dbReference type="InterPro" id="IPR016162">
    <property type="entry name" value="Ald_DH_N"/>
</dbReference>
<dbReference type="InterPro" id="IPR015590">
    <property type="entry name" value="Aldehyde_DH_dom"/>
</dbReference>
<dbReference type="InterPro" id="IPR017649">
    <property type="entry name" value="SuccinylGlu_semiald_DH_AstD"/>
</dbReference>
<dbReference type="NCBIfam" id="TIGR03240">
    <property type="entry name" value="arg_catab_astD"/>
    <property type="match status" value="1"/>
</dbReference>
<dbReference type="NCBIfam" id="NF006992">
    <property type="entry name" value="PRK09457.1"/>
    <property type="match status" value="1"/>
</dbReference>
<dbReference type="PANTHER" id="PTHR11699">
    <property type="entry name" value="ALDEHYDE DEHYDROGENASE-RELATED"/>
    <property type="match status" value="1"/>
</dbReference>
<dbReference type="Pfam" id="PF00171">
    <property type="entry name" value="Aldedh"/>
    <property type="match status" value="1"/>
</dbReference>
<dbReference type="SUPFAM" id="SSF53720">
    <property type="entry name" value="ALDH-like"/>
    <property type="match status" value="1"/>
</dbReference>
<dbReference type="PROSITE" id="PS00070">
    <property type="entry name" value="ALDEHYDE_DEHYDR_CYS"/>
    <property type="match status" value="1"/>
</dbReference>
<dbReference type="PROSITE" id="PS00687">
    <property type="entry name" value="ALDEHYDE_DEHYDR_GLU"/>
    <property type="match status" value="1"/>
</dbReference>
<feature type="chain" id="PRO_0000262421" description="N-succinylglutamate 5-semialdehyde dehydrogenase">
    <location>
        <begin position="1"/>
        <end position="492"/>
    </location>
</feature>
<feature type="active site" evidence="1">
    <location>
        <position position="243"/>
    </location>
</feature>
<feature type="active site" evidence="1">
    <location>
        <position position="277"/>
    </location>
</feature>
<feature type="binding site" evidence="1">
    <location>
        <begin position="220"/>
        <end position="225"/>
    </location>
    <ligand>
        <name>NAD(+)</name>
        <dbReference type="ChEBI" id="CHEBI:57540"/>
    </ligand>
</feature>
<keyword id="KW-0056">Arginine metabolism</keyword>
<keyword id="KW-0520">NAD</keyword>
<keyword id="KW-0560">Oxidoreductase</keyword>
<proteinExistence type="inferred from homology"/>
<gene>
    <name evidence="1" type="primary">astD</name>
    <name type="ordered locus">STY1809</name>
    <name type="ordered locus">t1184</name>
</gene>
<protein>
    <recommendedName>
        <fullName evidence="1">N-succinylglutamate 5-semialdehyde dehydrogenase</fullName>
        <ecNumber evidence="1">1.2.1.71</ecNumber>
    </recommendedName>
    <alternativeName>
        <fullName evidence="1">Succinylglutamic semialdehyde dehydrogenase</fullName>
        <shortName evidence="1">SGSD</shortName>
    </alternativeName>
</protein>
<organism>
    <name type="scientific">Salmonella typhi</name>
    <dbReference type="NCBI Taxonomy" id="90370"/>
    <lineage>
        <taxon>Bacteria</taxon>
        <taxon>Pseudomonadati</taxon>
        <taxon>Pseudomonadota</taxon>
        <taxon>Gammaproteobacteria</taxon>
        <taxon>Enterobacterales</taxon>
        <taxon>Enterobacteriaceae</taxon>
        <taxon>Salmonella</taxon>
    </lineage>
</organism>
<evidence type="ECO:0000255" key="1">
    <source>
        <dbReference type="HAMAP-Rule" id="MF_01174"/>
    </source>
</evidence>
<evidence type="ECO:0000305" key="2"/>
<sequence>MTLWINGDWITGQGERRRKTNPVSEEILWQGNDADAAQVAEACQAARAAFPRWARQPFAARQAIVEKFSVLLEAHKADLTEVIARETGKPRWEAATEVTAMINKIAISIKAYHARTGEQKSELVDGAATLRHRPHGVLAVFGPYNFPGHLPNGHIVPALLAGNTLIFKPSELTPWTGETVIKLWERAGLPAGVLNLVQGGRETGQALSSLDDLDGLLFTGSASTGYQLHRQLSGQPEKILALEMGGNNPLIIEDATNMDAAVHLTLQSAFITAGQRCTCARRLLVKQGAQGDAFLARLVDVAGRLQPGRWDDDPQPFIGGLISAQAAQHVMEAWRQREALGGRTLLAPRKVKEGTSLLTPGIIELTGVADVPDEEVFGPLLNVWRYAHFDEAIRLANNTRFGLSCGLVSTDRAQFEQLLLEARAGIVNWNKPLTGAASTAPFGGVGASGNHRPSAWYAADYCAWPMASLESPELTLPATLSPGLDFSRREAV</sequence>
<name>ASTD_SALTI</name>
<reference key="1">
    <citation type="journal article" date="2001" name="Nature">
        <title>Complete genome sequence of a multiple drug resistant Salmonella enterica serovar Typhi CT18.</title>
        <authorList>
            <person name="Parkhill J."/>
            <person name="Dougan G."/>
            <person name="James K.D."/>
            <person name="Thomson N.R."/>
            <person name="Pickard D."/>
            <person name="Wain J."/>
            <person name="Churcher C.M."/>
            <person name="Mungall K.L."/>
            <person name="Bentley S.D."/>
            <person name="Holden M.T.G."/>
            <person name="Sebaihia M."/>
            <person name="Baker S."/>
            <person name="Basham D."/>
            <person name="Brooks K."/>
            <person name="Chillingworth T."/>
            <person name="Connerton P."/>
            <person name="Cronin A."/>
            <person name="Davis P."/>
            <person name="Davies R.M."/>
            <person name="Dowd L."/>
            <person name="White N."/>
            <person name="Farrar J."/>
            <person name="Feltwell T."/>
            <person name="Hamlin N."/>
            <person name="Haque A."/>
            <person name="Hien T.T."/>
            <person name="Holroyd S."/>
            <person name="Jagels K."/>
            <person name="Krogh A."/>
            <person name="Larsen T.S."/>
            <person name="Leather S."/>
            <person name="Moule S."/>
            <person name="O'Gaora P."/>
            <person name="Parry C."/>
            <person name="Quail M.A."/>
            <person name="Rutherford K.M."/>
            <person name="Simmonds M."/>
            <person name="Skelton J."/>
            <person name="Stevens K."/>
            <person name="Whitehead S."/>
            <person name="Barrell B.G."/>
        </authorList>
    </citation>
    <scope>NUCLEOTIDE SEQUENCE [LARGE SCALE GENOMIC DNA]</scope>
    <source>
        <strain>CT18</strain>
    </source>
</reference>
<reference key="2">
    <citation type="journal article" date="2003" name="J. Bacteriol.">
        <title>Comparative genomics of Salmonella enterica serovar Typhi strains Ty2 and CT18.</title>
        <authorList>
            <person name="Deng W."/>
            <person name="Liou S.-R."/>
            <person name="Plunkett G. III"/>
            <person name="Mayhew G.F."/>
            <person name="Rose D.J."/>
            <person name="Burland V."/>
            <person name="Kodoyianni V."/>
            <person name="Schwartz D.C."/>
            <person name="Blattner F.R."/>
        </authorList>
    </citation>
    <scope>NUCLEOTIDE SEQUENCE [LARGE SCALE GENOMIC DNA]</scope>
    <source>
        <strain>ATCC 700931 / Ty2</strain>
    </source>
</reference>
<accession>Q8Z6G1</accession>
<accession>Q7CA95</accession>